<accession>Q9CK07</accession>
<dbReference type="EC" id="2.7.1.170" evidence="1"/>
<dbReference type="EMBL" id="AE004439">
    <property type="protein sequence ID" value="AAK03915.1"/>
    <property type="molecule type" value="Genomic_DNA"/>
</dbReference>
<dbReference type="SMR" id="Q9CK07"/>
<dbReference type="STRING" id="272843.PM1831"/>
<dbReference type="EnsemblBacteria" id="AAK03915">
    <property type="protein sequence ID" value="AAK03915"/>
    <property type="gene ID" value="PM1831"/>
</dbReference>
<dbReference type="KEGG" id="pmu:PM1831"/>
<dbReference type="HOGENOM" id="CLU_038782_0_0_6"/>
<dbReference type="UniPathway" id="UPA00343"/>
<dbReference type="UniPathway" id="UPA00544"/>
<dbReference type="Proteomes" id="UP000000809">
    <property type="component" value="Chromosome"/>
</dbReference>
<dbReference type="GO" id="GO:0005524">
    <property type="term" value="F:ATP binding"/>
    <property type="evidence" value="ECO:0007669"/>
    <property type="project" value="UniProtKB-UniRule"/>
</dbReference>
<dbReference type="GO" id="GO:0016301">
    <property type="term" value="F:kinase activity"/>
    <property type="evidence" value="ECO:0007669"/>
    <property type="project" value="UniProtKB-KW"/>
</dbReference>
<dbReference type="GO" id="GO:0016773">
    <property type="term" value="F:phosphotransferase activity, alcohol group as acceptor"/>
    <property type="evidence" value="ECO:0007669"/>
    <property type="project" value="UniProtKB-UniRule"/>
</dbReference>
<dbReference type="GO" id="GO:0097175">
    <property type="term" value="P:1,6-anhydro-N-acetyl-beta-muramic acid catabolic process"/>
    <property type="evidence" value="ECO:0007669"/>
    <property type="project" value="UniProtKB-UniRule"/>
</dbReference>
<dbReference type="GO" id="GO:0006040">
    <property type="term" value="P:amino sugar metabolic process"/>
    <property type="evidence" value="ECO:0007669"/>
    <property type="project" value="InterPro"/>
</dbReference>
<dbReference type="GO" id="GO:0009254">
    <property type="term" value="P:peptidoglycan turnover"/>
    <property type="evidence" value="ECO:0007669"/>
    <property type="project" value="UniProtKB-UniRule"/>
</dbReference>
<dbReference type="CDD" id="cd24050">
    <property type="entry name" value="ASKHA_NBD_ANMK"/>
    <property type="match status" value="1"/>
</dbReference>
<dbReference type="Gene3D" id="3.30.420.40">
    <property type="match status" value="2"/>
</dbReference>
<dbReference type="HAMAP" id="MF_01270">
    <property type="entry name" value="AnhMurNAc_kinase"/>
    <property type="match status" value="1"/>
</dbReference>
<dbReference type="InterPro" id="IPR005338">
    <property type="entry name" value="Anhydro_N_Ac-Mur_kinase"/>
</dbReference>
<dbReference type="InterPro" id="IPR043129">
    <property type="entry name" value="ATPase_NBD"/>
</dbReference>
<dbReference type="NCBIfam" id="NF007139">
    <property type="entry name" value="PRK09585.1-3"/>
    <property type="match status" value="1"/>
</dbReference>
<dbReference type="NCBIfam" id="NF007148">
    <property type="entry name" value="PRK09585.3-2"/>
    <property type="match status" value="1"/>
</dbReference>
<dbReference type="PANTHER" id="PTHR30605">
    <property type="entry name" value="ANHYDRO-N-ACETYLMURAMIC ACID KINASE"/>
    <property type="match status" value="1"/>
</dbReference>
<dbReference type="PANTHER" id="PTHR30605:SF0">
    <property type="entry name" value="ANHYDRO-N-ACETYLMURAMIC ACID KINASE"/>
    <property type="match status" value="1"/>
</dbReference>
<dbReference type="Pfam" id="PF03702">
    <property type="entry name" value="AnmK"/>
    <property type="match status" value="1"/>
</dbReference>
<dbReference type="SUPFAM" id="SSF53067">
    <property type="entry name" value="Actin-like ATPase domain"/>
    <property type="match status" value="1"/>
</dbReference>
<feature type="chain" id="PRO_0000250020" description="Anhydro-N-acetylmuramic acid kinase">
    <location>
        <begin position="1"/>
        <end position="377"/>
    </location>
</feature>
<feature type="binding site" evidence="1">
    <location>
        <begin position="14"/>
        <end position="21"/>
    </location>
    <ligand>
        <name>ATP</name>
        <dbReference type="ChEBI" id="CHEBI:30616"/>
    </ligand>
</feature>
<comment type="function">
    <text evidence="1">Catalyzes the specific phosphorylation of 1,6-anhydro-N-acetylmuramic acid (anhMurNAc) with the simultaneous cleavage of the 1,6-anhydro ring, generating MurNAc-6-P. Is required for the utilization of anhMurNAc either imported from the medium or derived from its own cell wall murein, and thus plays a role in cell wall recycling.</text>
</comment>
<comment type="catalytic activity">
    <reaction evidence="1">
        <text>1,6-anhydro-N-acetyl-beta-muramate + ATP + H2O = N-acetyl-D-muramate 6-phosphate + ADP + H(+)</text>
        <dbReference type="Rhea" id="RHEA:24952"/>
        <dbReference type="ChEBI" id="CHEBI:15377"/>
        <dbReference type="ChEBI" id="CHEBI:15378"/>
        <dbReference type="ChEBI" id="CHEBI:30616"/>
        <dbReference type="ChEBI" id="CHEBI:58690"/>
        <dbReference type="ChEBI" id="CHEBI:58722"/>
        <dbReference type="ChEBI" id="CHEBI:456216"/>
        <dbReference type="EC" id="2.7.1.170"/>
    </reaction>
</comment>
<comment type="pathway">
    <text evidence="1">Amino-sugar metabolism; 1,6-anhydro-N-acetylmuramate degradation.</text>
</comment>
<comment type="pathway">
    <text evidence="1">Cell wall biogenesis; peptidoglycan recycling.</text>
</comment>
<comment type="similarity">
    <text evidence="1">Belongs to the anhydro-N-acetylmuramic acid kinase family.</text>
</comment>
<evidence type="ECO:0000255" key="1">
    <source>
        <dbReference type="HAMAP-Rule" id="MF_01270"/>
    </source>
</evidence>
<protein>
    <recommendedName>
        <fullName evidence="1">Anhydro-N-acetylmuramic acid kinase</fullName>
        <ecNumber evidence="1">2.7.1.170</ecNumber>
    </recommendedName>
    <alternativeName>
        <fullName evidence="1">AnhMurNAc kinase</fullName>
    </alternativeName>
</protein>
<organism>
    <name type="scientific">Pasteurella multocida (strain Pm70)</name>
    <dbReference type="NCBI Taxonomy" id="272843"/>
    <lineage>
        <taxon>Bacteria</taxon>
        <taxon>Pseudomonadati</taxon>
        <taxon>Pseudomonadota</taxon>
        <taxon>Gammaproteobacteria</taxon>
        <taxon>Pasteurellales</taxon>
        <taxon>Pasteurellaceae</taxon>
        <taxon>Pasteurella</taxon>
    </lineage>
</organism>
<gene>
    <name evidence="1" type="primary">anmK</name>
    <name type="ordered locus">PM1831</name>
</gene>
<sequence>MKEATMYYIGVMSGTSLDGVDLALMDFSCAQPQLIHADFYPMPPAIRQQISTLCNSGTTTLQALGELDHQLGLLYTDCIQQFLQKHRLSPEQITAIGCHGQTVWHSPNSHYPFTMQIGDANLIAAKTGITTVADFRRKDMAFGGQGAPLVPAFHQALFRKPNQATVVLNVGGISNISRLLPNEEVIGYDTGPGNTLLDAWIEKHQGKAYDKNAEWAKSGKVNTDLLADLLDEPFFALPAPKSTGRELFNLAWLNKKLQKHTALLPQDVQATLVELTAQSIVDQLNQIETELDRHLLVCGGGVKNCLLMARLTALLPQWQVQTTNDYGLDADYVEAAAFAWLAYQRLNDLPGNLPSVTGAKSAVSLGAIYPKEKDVAA</sequence>
<keyword id="KW-0067">ATP-binding</keyword>
<keyword id="KW-0119">Carbohydrate metabolism</keyword>
<keyword id="KW-0418">Kinase</keyword>
<keyword id="KW-0547">Nucleotide-binding</keyword>
<keyword id="KW-1185">Reference proteome</keyword>
<keyword id="KW-0808">Transferase</keyword>
<reference key="1">
    <citation type="journal article" date="2001" name="Proc. Natl. Acad. Sci. U.S.A.">
        <title>Complete genomic sequence of Pasteurella multocida Pm70.</title>
        <authorList>
            <person name="May B.J."/>
            <person name="Zhang Q."/>
            <person name="Li L.L."/>
            <person name="Paustian M.L."/>
            <person name="Whittam T.S."/>
            <person name="Kapur V."/>
        </authorList>
    </citation>
    <scope>NUCLEOTIDE SEQUENCE [LARGE SCALE GENOMIC DNA]</scope>
    <source>
        <strain>Pm70</strain>
    </source>
</reference>
<name>ANMK_PASMU</name>
<proteinExistence type="inferred from homology"/>